<proteinExistence type="inferred from homology"/>
<reference key="1">
    <citation type="journal article" date="2008" name="BMC Genomics">
        <title>Genome sequence and rapid evolution of the rice pathogen Xanthomonas oryzae pv. oryzae PXO99A.</title>
        <authorList>
            <person name="Salzberg S.L."/>
            <person name="Sommer D.D."/>
            <person name="Schatz M.C."/>
            <person name="Phillippy A.M."/>
            <person name="Rabinowicz P.D."/>
            <person name="Tsuge S."/>
            <person name="Furutani A."/>
            <person name="Ochiai H."/>
            <person name="Delcher A.L."/>
            <person name="Kelley D."/>
            <person name="Madupu R."/>
            <person name="Puiu D."/>
            <person name="Radune D."/>
            <person name="Shumway M."/>
            <person name="Trapnell C."/>
            <person name="Aparna G."/>
            <person name="Jha G."/>
            <person name="Pandey A."/>
            <person name="Patil P.B."/>
            <person name="Ishihara H."/>
            <person name="Meyer D.F."/>
            <person name="Szurek B."/>
            <person name="Verdier V."/>
            <person name="Koebnik R."/>
            <person name="Dow J.M."/>
            <person name="Ryan R.P."/>
            <person name="Hirata H."/>
            <person name="Tsuyumu S."/>
            <person name="Won Lee S."/>
            <person name="Seo Y.-S."/>
            <person name="Sriariyanum M."/>
            <person name="Ronald P.C."/>
            <person name="Sonti R.V."/>
            <person name="Van Sluys M.-A."/>
            <person name="Leach J.E."/>
            <person name="White F.F."/>
            <person name="Bogdanove A.J."/>
        </authorList>
    </citation>
    <scope>NUCLEOTIDE SEQUENCE [LARGE SCALE GENOMIC DNA]</scope>
    <source>
        <strain>PXO99A</strain>
    </source>
</reference>
<keyword id="KW-0687">Ribonucleoprotein</keyword>
<keyword id="KW-0689">Ribosomal protein</keyword>
<keyword id="KW-0694">RNA-binding</keyword>
<keyword id="KW-0699">rRNA-binding</keyword>
<keyword id="KW-0820">tRNA-binding</keyword>
<dbReference type="EMBL" id="CP000967">
    <property type="protein sequence ID" value="ACD57908.1"/>
    <property type="molecule type" value="Genomic_DNA"/>
</dbReference>
<dbReference type="RefSeq" id="WP_003486672.1">
    <property type="nucleotide sequence ID" value="NC_010717.2"/>
</dbReference>
<dbReference type="SMR" id="B2SQT1"/>
<dbReference type="GeneID" id="97509357"/>
<dbReference type="KEGG" id="xop:PXO_04499"/>
<dbReference type="eggNOG" id="COG0099">
    <property type="taxonomic scope" value="Bacteria"/>
</dbReference>
<dbReference type="HOGENOM" id="CLU_103849_1_2_6"/>
<dbReference type="Proteomes" id="UP000001740">
    <property type="component" value="Chromosome"/>
</dbReference>
<dbReference type="GO" id="GO:0005829">
    <property type="term" value="C:cytosol"/>
    <property type="evidence" value="ECO:0007669"/>
    <property type="project" value="TreeGrafter"/>
</dbReference>
<dbReference type="GO" id="GO:0015935">
    <property type="term" value="C:small ribosomal subunit"/>
    <property type="evidence" value="ECO:0007669"/>
    <property type="project" value="TreeGrafter"/>
</dbReference>
<dbReference type="GO" id="GO:0019843">
    <property type="term" value="F:rRNA binding"/>
    <property type="evidence" value="ECO:0007669"/>
    <property type="project" value="UniProtKB-UniRule"/>
</dbReference>
<dbReference type="GO" id="GO:0003735">
    <property type="term" value="F:structural constituent of ribosome"/>
    <property type="evidence" value="ECO:0007669"/>
    <property type="project" value="InterPro"/>
</dbReference>
<dbReference type="GO" id="GO:0000049">
    <property type="term" value="F:tRNA binding"/>
    <property type="evidence" value="ECO:0007669"/>
    <property type="project" value="UniProtKB-UniRule"/>
</dbReference>
<dbReference type="GO" id="GO:0006412">
    <property type="term" value="P:translation"/>
    <property type="evidence" value="ECO:0007669"/>
    <property type="project" value="UniProtKB-UniRule"/>
</dbReference>
<dbReference type="FunFam" id="1.10.8.50:FF:000001">
    <property type="entry name" value="30S ribosomal protein S13"/>
    <property type="match status" value="1"/>
</dbReference>
<dbReference type="FunFam" id="4.10.910.10:FF:000001">
    <property type="entry name" value="30S ribosomal protein S13"/>
    <property type="match status" value="1"/>
</dbReference>
<dbReference type="Gene3D" id="1.10.8.50">
    <property type="match status" value="1"/>
</dbReference>
<dbReference type="Gene3D" id="4.10.910.10">
    <property type="entry name" value="30s ribosomal protein s13, domain 2"/>
    <property type="match status" value="1"/>
</dbReference>
<dbReference type="HAMAP" id="MF_01315">
    <property type="entry name" value="Ribosomal_uS13"/>
    <property type="match status" value="1"/>
</dbReference>
<dbReference type="InterPro" id="IPR027437">
    <property type="entry name" value="Rbsml_uS13_C"/>
</dbReference>
<dbReference type="InterPro" id="IPR001892">
    <property type="entry name" value="Ribosomal_uS13"/>
</dbReference>
<dbReference type="InterPro" id="IPR010979">
    <property type="entry name" value="Ribosomal_uS13-like_H2TH"/>
</dbReference>
<dbReference type="InterPro" id="IPR019980">
    <property type="entry name" value="Ribosomal_uS13_bac-type"/>
</dbReference>
<dbReference type="InterPro" id="IPR018269">
    <property type="entry name" value="Ribosomal_uS13_CS"/>
</dbReference>
<dbReference type="NCBIfam" id="TIGR03631">
    <property type="entry name" value="uS13_bact"/>
    <property type="match status" value="1"/>
</dbReference>
<dbReference type="PANTHER" id="PTHR10871">
    <property type="entry name" value="30S RIBOSOMAL PROTEIN S13/40S RIBOSOMAL PROTEIN S18"/>
    <property type="match status" value="1"/>
</dbReference>
<dbReference type="PANTHER" id="PTHR10871:SF1">
    <property type="entry name" value="SMALL RIBOSOMAL SUBUNIT PROTEIN US13M"/>
    <property type="match status" value="1"/>
</dbReference>
<dbReference type="Pfam" id="PF00416">
    <property type="entry name" value="Ribosomal_S13"/>
    <property type="match status" value="1"/>
</dbReference>
<dbReference type="PIRSF" id="PIRSF002134">
    <property type="entry name" value="Ribosomal_S13"/>
    <property type="match status" value="1"/>
</dbReference>
<dbReference type="SUPFAM" id="SSF46946">
    <property type="entry name" value="S13-like H2TH domain"/>
    <property type="match status" value="1"/>
</dbReference>
<dbReference type="PROSITE" id="PS00646">
    <property type="entry name" value="RIBOSOMAL_S13_1"/>
    <property type="match status" value="1"/>
</dbReference>
<dbReference type="PROSITE" id="PS50159">
    <property type="entry name" value="RIBOSOMAL_S13_2"/>
    <property type="match status" value="1"/>
</dbReference>
<feature type="chain" id="PRO_1000141330" description="Small ribosomal subunit protein uS13">
    <location>
        <begin position="1"/>
        <end position="118"/>
    </location>
</feature>
<feature type="region of interest" description="Disordered" evidence="2">
    <location>
        <begin position="94"/>
        <end position="118"/>
    </location>
</feature>
<evidence type="ECO:0000255" key="1">
    <source>
        <dbReference type="HAMAP-Rule" id="MF_01315"/>
    </source>
</evidence>
<evidence type="ECO:0000256" key="2">
    <source>
        <dbReference type="SAM" id="MobiDB-lite"/>
    </source>
</evidence>
<evidence type="ECO:0000305" key="3"/>
<sequence length="118" mass="13375">MARIAGVNLPAQKHVWVGLQSIYGIGRTRSKKLCESAGVTSTTKIRDLSEPEIERLRAEVGKYVVEGDLRREIGIAIKRLMDLGCYRGLRHRRGLPLRGQRTRTNARTRKGPRKAIRK</sequence>
<protein>
    <recommendedName>
        <fullName evidence="1">Small ribosomal subunit protein uS13</fullName>
    </recommendedName>
    <alternativeName>
        <fullName evidence="3">30S ribosomal protein S13</fullName>
    </alternativeName>
</protein>
<accession>B2SQT1</accession>
<gene>
    <name evidence="1" type="primary">rpsM</name>
    <name type="ordered locus">PXO_04499</name>
</gene>
<organism>
    <name type="scientific">Xanthomonas oryzae pv. oryzae (strain PXO99A)</name>
    <dbReference type="NCBI Taxonomy" id="360094"/>
    <lineage>
        <taxon>Bacteria</taxon>
        <taxon>Pseudomonadati</taxon>
        <taxon>Pseudomonadota</taxon>
        <taxon>Gammaproteobacteria</taxon>
        <taxon>Lysobacterales</taxon>
        <taxon>Lysobacteraceae</taxon>
        <taxon>Xanthomonas</taxon>
    </lineage>
</organism>
<name>RS13_XANOP</name>
<comment type="function">
    <text evidence="1">Located at the top of the head of the 30S subunit, it contacts several helices of the 16S rRNA. In the 70S ribosome it contacts the 23S rRNA (bridge B1a) and protein L5 of the 50S subunit (bridge B1b), connecting the 2 subunits; these bridges are implicated in subunit movement. Contacts the tRNAs in the A and P-sites.</text>
</comment>
<comment type="subunit">
    <text evidence="1">Part of the 30S ribosomal subunit. Forms a loose heterodimer with protein S19. Forms two bridges to the 50S subunit in the 70S ribosome.</text>
</comment>
<comment type="similarity">
    <text evidence="1">Belongs to the universal ribosomal protein uS13 family.</text>
</comment>